<protein>
    <recommendedName>
        <fullName>DDB1- and CUL4-associated factor 8</fullName>
    </recommendedName>
    <alternativeName>
        <fullName>WD repeat-containing protein 42A</fullName>
    </alternativeName>
</protein>
<proteinExistence type="evidence at transcript level"/>
<keyword id="KW-0963">Cytoplasm</keyword>
<keyword id="KW-0539">Nucleus</keyword>
<keyword id="KW-1185">Reference proteome</keyword>
<keyword id="KW-0677">Repeat</keyword>
<keyword id="KW-0853">WD repeat</keyword>
<evidence type="ECO:0000250" key="1">
    <source>
        <dbReference type="UniProtKB" id="Q5TAQ9"/>
    </source>
</evidence>
<evidence type="ECO:0000256" key="2">
    <source>
        <dbReference type="SAM" id="MobiDB-lite"/>
    </source>
</evidence>
<evidence type="ECO:0000305" key="3"/>
<organism>
    <name type="scientific">Xenopus tropicalis</name>
    <name type="common">Western clawed frog</name>
    <name type="synonym">Silurana tropicalis</name>
    <dbReference type="NCBI Taxonomy" id="8364"/>
    <lineage>
        <taxon>Eukaryota</taxon>
        <taxon>Metazoa</taxon>
        <taxon>Chordata</taxon>
        <taxon>Craniata</taxon>
        <taxon>Vertebrata</taxon>
        <taxon>Euteleostomi</taxon>
        <taxon>Amphibia</taxon>
        <taxon>Batrachia</taxon>
        <taxon>Anura</taxon>
        <taxon>Pipoidea</taxon>
        <taxon>Pipidae</taxon>
        <taxon>Xenopodinae</taxon>
        <taxon>Xenopus</taxon>
        <taxon>Silurana</taxon>
    </lineage>
</organism>
<feature type="chain" id="PRO_0000296961" description="DDB1- and CUL4-associated factor 8">
    <location>
        <begin position="1"/>
        <end position="604"/>
    </location>
</feature>
<feature type="repeat" description="WD 1">
    <location>
        <begin position="197"/>
        <end position="236"/>
    </location>
</feature>
<feature type="repeat" description="WD 2">
    <location>
        <begin position="240"/>
        <end position="281"/>
    </location>
</feature>
<feature type="repeat" description="WD 3">
    <location>
        <begin position="287"/>
        <end position="327"/>
    </location>
</feature>
<feature type="repeat" description="WD 4">
    <location>
        <begin position="335"/>
        <end position="375"/>
    </location>
</feature>
<feature type="repeat" description="WD 5">
    <location>
        <begin position="391"/>
        <end position="430"/>
    </location>
</feature>
<feature type="repeat" description="WD 6">
    <location>
        <begin position="438"/>
        <end position="478"/>
    </location>
</feature>
<feature type="repeat" description="WD 7">
    <location>
        <begin position="482"/>
        <end position="522"/>
    </location>
</feature>
<feature type="region of interest" description="Disordered" evidence="2">
    <location>
        <begin position="1"/>
        <end position="141"/>
    </location>
</feature>
<feature type="region of interest" description="Disordered" evidence="2">
    <location>
        <begin position="564"/>
        <end position="604"/>
    </location>
</feature>
<feature type="short sequence motif" description="Nuclear export signal" evidence="1">
    <location>
        <begin position="39"/>
        <end position="50"/>
    </location>
</feature>
<feature type="compositionally biased region" description="Polar residues" evidence="2">
    <location>
        <begin position="14"/>
        <end position="24"/>
    </location>
</feature>
<feature type="compositionally biased region" description="Polar residues" evidence="2">
    <location>
        <begin position="46"/>
        <end position="60"/>
    </location>
</feature>
<feature type="compositionally biased region" description="Basic and acidic residues" evidence="2">
    <location>
        <begin position="61"/>
        <end position="99"/>
    </location>
</feature>
<feature type="compositionally biased region" description="Acidic residues" evidence="2">
    <location>
        <begin position="100"/>
        <end position="116"/>
    </location>
</feature>
<feature type="compositionally biased region" description="Basic residues" evidence="2">
    <location>
        <begin position="119"/>
        <end position="129"/>
    </location>
</feature>
<feature type="compositionally biased region" description="Basic and acidic residues" evidence="2">
    <location>
        <begin position="130"/>
        <end position="141"/>
    </location>
</feature>
<name>DCAF8_XENTR</name>
<accession>Q28I90</accession>
<gene>
    <name type="primary">dcaf8</name>
    <name type="synonym">wdr42a</name>
    <name type="ORF">TEgg075a15.1</name>
</gene>
<comment type="subcellular location">
    <subcellularLocation>
        <location evidence="1">Nucleus</location>
    </subcellularLocation>
    <subcellularLocation>
        <location evidence="1">Cytoplasm</location>
    </subcellularLocation>
    <text evidence="1">It shuttles between the nucleus and the cytoplasm.</text>
</comment>
<comment type="similarity">
    <text evidence="3">Belongs to the WD repeat DCAF8 family.</text>
</comment>
<reference key="1">
    <citation type="submission" date="2006-10" db="EMBL/GenBank/DDBJ databases">
        <authorList>
            <consortium name="Sanger Xenopus tropicalis EST/cDNA project"/>
        </authorList>
    </citation>
    <scope>NUCLEOTIDE SEQUENCE [LARGE SCALE MRNA]</scope>
    <source>
        <tissue>Egg</tissue>
    </source>
</reference>
<reference key="2">
    <citation type="submission" date="2007-03" db="EMBL/GenBank/DDBJ databases">
        <authorList>
            <consortium name="NIH - Xenopus Gene Collection (XGC) project"/>
        </authorList>
    </citation>
    <scope>NUCLEOTIDE SEQUENCE [LARGE SCALE MRNA]</scope>
    <source>
        <tissue>Tadpole</tissue>
    </source>
</reference>
<dbReference type="EMBL" id="CR760529">
    <property type="protein sequence ID" value="CAJ81403.1"/>
    <property type="molecule type" value="mRNA"/>
</dbReference>
<dbReference type="EMBL" id="BC135344">
    <property type="protein sequence ID" value="AAI35345.1"/>
    <property type="molecule type" value="mRNA"/>
</dbReference>
<dbReference type="RefSeq" id="NP_001016610.1">
    <property type="nucleotide sequence ID" value="NM_001016610.1"/>
</dbReference>
<dbReference type="RefSeq" id="XP_017951752.1">
    <property type="nucleotide sequence ID" value="XM_018096263.1"/>
</dbReference>
<dbReference type="RefSeq" id="XP_031746323.1">
    <property type="nucleotide sequence ID" value="XM_031890463.1"/>
</dbReference>
<dbReference type="SMR" id="Q28I90"/>
<dbReference type="FunCoup" id="Q28I90">
    <property type="interactions" value="3788"/>
</dbReference>
<dbReference type="STRING" id="8364.ENSXETP00000025350"/>
<dbReference type="PaxDb" id="8364-ENSXETP00000017785"/>
<dbReference type="DNASU" id="549364"/>
<dbReference type="GeneID" id="549364"/>
<dbReference type="KEGG" id="xtr:549364"/>
<dbReference type="AGR" id="Xenbase:XB-GENE-989771"/>
<dbReference type="CTD" id="50717"/>
<dbReference type="Xenbase" id="XB-GENE-989771">
    <property type="gene designation" value="dcaf8"/>
</dbReference>
<dbReference type="eggNOG" id="KOG1334">
    <property type="taxonomic scope" value="Eukaryota"/>
</dbReference>
<dbReference type="InParanoid" id="Q28I90"/>
<dbReference type="OMA" id="MRMMNGD"/>
<dbReference type="OrthoDB" id="4869960at2759"/>
<dbReference type="Reactome" id="R-XTR-8951664">
    <property type="pathway name" value="Neddylation"/>
</dbReference>
<dbReference type="Proteomes" id="UP000008143">
    <property type="component" value="Chromosome 8"/>
</dbReference>
<dbReference type="GO" id="GO:0005737">
    <property type="term" value="C:cytoplasm"/>
    <property type="evidence" value="ECO:0007669"/>
    <property type="project" value="UniProtKB-SubCell"/>
</dbReference>
<dbReference type="GO" id="GO:0005634">
    <property type="term" value="C:nucleus"/>
    <property type="evidence" value="ECO:0007669"/>
    <property type="project" value="UniProtKB-SubCell"/>
</dbReference>
<dbReference type="FunFam" id="2.130.10.10:FF:000144">
    <property type="entry name" value="DDB1- and CUL4-associated factor 8"/>
    <property type="match status" value="1"/>
</dbReference>
<dbReference type="Gene3D" id="2.130.10.10">
    <property type="entry name" value="YVTN repeat-like/Quinoprotein amine dehydrogenase"/>
    <property type="match status" value="1"/>
</dbReference>
<dbReference type="InterPro" id="IPR045151">
    <property type="entry name" value="DCAF8"/>
</dbReference>
<dbReference type="InterPro" id="IPR015943">
    <property type="entry name" value="WD40/YVTN_repeat-like_dom_sf"/>
</dbReference>
<dbReference type="InterPro" id="IPR036322">
    <property type="entry name" value="WD40_repeat_dom_sf"/>
</dbReference>
<dbReference type="InterPro" id="IPR001680">
    <property type="entry name" value="WD40_rpt"/>
</dbReference>
<dbReference type="PANTHER" id="PTHR15574:SF21">
    <property type="entry name" value="DDB1- AND CUL4-ASSOCIATED FACTOR 8"/>
    <property type="match status" value="1"/>
</dbReference>
<dbReference type="PANTHER" id="PTHR15574">
    <property type="entry name" value="WD REPEAT DOMAIN-CONTAINING FAMILY"/>
    <property type="match status" value="1"/>
</dbReference>
<dbReference type="Pfam" id="PF00400">
    <property type="entry name" value="WD40"/>
    <property type="match status" value="3"/>
</dbReference>
<dbReference type="SMART" id="SM00320">
    <property type="entry name" value="WD40"/>
    <property type="match status" value="7"/>
</dbReference>
<dbReference type="SUPFAM" id="SSF50978">
    <property type="entry name" value="WD40 repeat-like"/>
    <property type="match status" value="1"/>
</dbReference>
<dbReference type="PROSITE" id="PS50082">
    <property type="entry name" value="WD_REPEATS_2"/>
    <property type="match status" value="1"/>
</dbReference>
<dbReference type="PROSITE" id="PS50294">
    <property type="entry name" value="WD_REPEATS_REGION"/>
    <property type="match status" value="1"/>
</dbReference>
<sequence length="604" mass="67794">MSFSGEMANGKTDVANSGFSSSPEDMSGAEEGKENSSGIEVEASDVSLSLTGDETGTTQAESRDTCSETSGEDKDSDSMDDTGHYSINDENRGNDQSHSEDEEEEEEEEEDEEEEEAVRHRKRAQRKRANRDQDSSDEERALEDWVLSEKTPLPRPRWRALRALRQRQMGSSTRFIYDACGARGFVQRFRLLHGLDGHSGCVNTLHFNQRGTWLASGSDDLKVVVWDWVRRKPVLEFESGHKSNVFQAKFLPNSGDSTLAMCARDGQVRVAELSATHCCKNTKRVAQHKGASHKLALERDSPCTFLSAGEDAVVFTIDLRQDRPASRLVVTKEKEKKVGLYTIYVNPANTYQFAVGGRDQFVRIYDQRKINENVNNGVLKKFCPHHLVTSEAKANITCLVYSHDGSELLASYNDEDIYLFNSSHSDGAEYIKRYKGHRNNATVKGVNFYGPRSEFVVSGSDCGHIFLWEKSSCQIVQFMDGDKGGVVNCLEPHPHLPVLATSGLDYDVKIWLPTAKEPTELNGLKEVIKKNKRERDEDSLHHTDLFDNHMLWFLMHHLRQRGQRRRRRDAGLGAGDADSDDSPSSSDSSDDDEDGPDRVQCIPS</sequence>